<evidence type="ECO:0000250" key="1"/>
<evidence type="ECO:0000255" key="2"/>
<evidence type="ECO:0000255" key="3">
    <source>
        <dbReference type="PROSITE-ProRule" id="PRU00478"/>
    </source>
</evidence>
<evidence type="ECO:0000255" key="4">
    <source>
        <dbReference type="PROSITE-ProRule" id="PRU00479"/>
    </source>
</evidence>
<keyword id="KW-0011">Acute phase</keyword>
<keyword id="KW-0130">Cell adhesion</keyword>
<keyword id="KW-0133">Cell shape</keyword>
<keyword id="KW-1015">Disulfide bond</keyword>
<keyword id="KW-0325">Glycoprotein</keyword>
<keyword id="KW-0358">Heparin-binding</keyword>
<keyword id="KW-0677">Repeat</keyword>
<dbReference type="EMBL" id="S76886">
    <property type="protein sequence ID" value="AAB34250.1"/>
    <property type="molecule type" value="mRNA"/>
</dbReference>
<dbReference type="PIR" id="I51279">
    <property type="entry name" value="I51279"/>
</dbReference>
<dbReference type="SMR" id="Q91400"/>
<dbReference type="GO" id="GO:0005576">
    <property type="term" value="C:extracellular region"/>
    <property type="evidence" value="ECO:0007669"/>
    <property type="project" value="InterPro"/>
</dbReference>
<dbReference type="GO" id="GO:0008201">
    <property type="term" value="F:heparin binding"/>
    <property type="evidence" value="ECO:0007669"/>
    <property type="project" value="UniProtKB-KW"/>
</dbReference>
<dbReference type="GO" id="GO:0006953">
    <property type="term" value="P:acute-phase response"/>
    <property type="evidence" value="ECO:0007669"/>
    <property type="project" value="UniProtKB-KW"/>
</dbReference>
<dbReference type="GO" id="GO:0007155">
    <property type="term" value="P:cell adhesion"/>
    <property type="evidence" value="ECO:0007669"/>
    <property type="project" value="UniProtKB-KW"/>
</dbReference>
<dbReference type="GO" id="GO:0008360">
    <property type="term" value="P:regulation of cell shape"/>
    <property type="evidence" value="ECO:0007669"/>
    <property type="project" value="UniProtKB-KW"/>
</dbReference>
<dbReference type="CDD" id="cd00061">
    <property type="entry name" value="FN1"/>
    <property type="match status" value="1"/>
</dbReference>
<dbReference type="CDD" id="cd00062">
    <property type="entry name" value="FN2"/>
    <property type="match status" value="1"/>
</dbReference>
<dbReference type="FunFam" id="2.10.70.10:FF:000018">
    <property type="entry name" value="Fibronectin 1"/>
    <property type="match status" value="2"/>
</dbReference>
<dbReference type="FunFam" id="2.10.10.10:FF:000001">
    <property type="entry name" value="Fibronectin 1a isoform 1"/>
    <property type="match status" value="1"/>
</dbReference>
<dbReference type="Gene3D" id="2.10.70.10">
    <property type="entry name" value="Complement Module, domain 1"/>
    <property type="match status" value="3"/>
</dbReference>
<dbReference type="Gene3D" id="2.10.10.10">
    <property type="entry name" value="Fibronectin, type II, collagen-binding"/>
    <property type="match status" value="1"/>
</dbReference>
<dbReference type="InterPro" id="IPR000083">
    <property type="entry name" value="Fibronectin_type1"/>
</dbReference>
<dbReference type="InterPro" id="IPR000562">
    <property type="entry name" value="FN_type2_dom"/>
</dbReference>
<dbReference type="InterPro" id="IPR036943">
    <property type="entry name" value="FN_type2_sf"/>
</dbReference>
<dbReference type="InterPro" id="IPR013806">
    <property type="entry name" value="Kringle-like"/>
</dbReference>
<dbReference type="Pfam" id="PF00039">
    <property type="entry name" value="fn1"/>
    <property type="match status" value="3"/>
</dbReference>
<dbReference type="Pfam" id="PF00040">
    <property type="entry name" value="fn2"/>
    <property type="match status" value="1"/>
</dbReference>
<dbReference type="PRINTS" id="PR00013">
    <property type="entry name" value="FNTYPEII"/>
</dbReference>
<dbReference type="SMART" id="SM00058">
    <property type="entry name" value="FN1"/>
    <property type="match status" value="3"/>
</dbReference>
<dbReference type="SMART" id="SM00059">
    <property type="entry name" value="FN2"/>
    <property type="match status" value="1"/>
</dbReference>
<dbReference type="SUPFAM" id="SSF57603">
    <property type="entry name" value="FnI-like domain"/>
    <property type="match status" value="3"/>
</dbReference>
<dbReference type="SUPFAM" id="SSF57440">
    <property type="entry name" value="Kringle-like"/>
    <property type="match status" value="1"/>
</dbReference>
<dbReference type="PROSITE" id="PS01253">
    <property type="entry name" value="FN1_1"/>
    <property type="match status" value="1"/>
</dbReference>
<dbReference type="PROSITE" id="PS51091">
    <property type="entry name" value="FN1_2"/>
    <property type="match status" value="3"/>
</dbReference>
<dbReference type="PROSITE" id="PS51092">
    <property type="entry name" value="FN2_2"/>
    <property type="match status" value="1"/>
</dbReference>
<name>FINC_NOTVI</name>
<protein>
    <recommendedName>
        <fullName>Fibronectin</fullName>
        <shortName>FN</shortName>
    </recommendedName>
</protein>
<accession>Q91400</accession>
<reference key="1">
    <citation type="journal article" date="1995" name="Dev. Dyn.">
        <title>Examination of fibronectin distribution and its sources in the regenerating newt limb by immunocytochemistry and in situ hybridization.</title>
        <authorList>
            <person name="Nace J.D."/>
            <person name="Tassava R.A."/>
        </authorList>
    </citation>
    <scope>NUCLEOTIDE SEQUENCE [MRNA]</scope>
</reference>
<feature type="chain" id="PRO_0000158532" description="Fibronectin">
    <location>
        <begin position="1" status="less than"/>
        <end position="190" status="greater than"/>
    </location>
</feature>
<feature type="domain" description="Fibronectin type-II" evidence="3 4">
    <location>
        <begin position="1" status="less than"/>
        <end position="50"/>
    </location>
</feature>
<feature type="domain" description="Fibronectin type-I 1" evidence="3">
    <location>
        <begin position="55"/>
        <end position="98"/>
    </location>
</feature>
<feature type="domain" description="Fibronectin type-I 2" evidence="3">
    <location>
        <begin position="103"/>
        <end position="145"/>
    </location>
</feature>
<feature type="domain" description="Fibronectin type-I 3" evidence="3">
    <location>
        <begin position="146"/>
        <end position="190" status="greater than"/>
    </location>
</feature>
<feature type="glycosylation site" description="N-linked (GlcNAc...) asparagine" evidence="2">
    <location>
        <position position="17"/>
    </location>
</feature>
<feature type="glycosylation site" description="N-linked (GlcNAc...) asparagine" evidence="2">
    <location>
        <position position="115"/>
    </location>
</feature>
<feature type="glycosylation site" description="N-linked (GlcNAc...) asparagine" evidence="2">
    <location>
        <position position="129"/>
    </location>
</feature>
<feature type="disulfide bond" evidence="1">
    <location>
        <begin position="7"/>
        <end position="33"/>
    </location>
</feature>
<feature type="disulfide bond" evidence="1">
    <location>
        <begin position="21"/>
        <end position="48"/>
    </location>
</feature>
<feature type="disulfide bond" evidence="1">
    <location>
        <begin position="57"/>
        <end position="85"/>
    </location>
</feature>
<feature type="disulfide bond" evidence="1">
    <location>
        <begin position="83"/>
        <end position="95"/>
    </location>
</feature>
<feature type="disulfide bond" evidence="1">
    <location>
        <begin position="105"/>
        <end position="132"/>
    </location>
</feature>
<feature type="disulfide bond" evidence="1">
    <location>
        <begin position="130"/>
        <end position="142"/>
    </location>
</feature>
<feature type="disulfide bond" evidence="1">
    <location>
        <begin position="174"/>
        <end position="186"/>
    </location>
</feature>
<feature type="non-terminal residue">
    <location>
        <position position="1"/>
    </location>
</feature>
<feature type="non-terminal residue">
    <location>
        <position position="190"/>
    </location>
</feature>
<comment type="function">
    <text evidence="1">Fibronectins bind cell surfaces and various compounds including collagen, fibrin, heparin, DNA, and actin. Fibronectins are involved in cell adhesion, cell motility, opsonization, wound healing, and maintenance of cell shape. May be involved in osteoblast compaction (By similarity).</text>
</comment>
<comment type="function">
    <text>Beneath wound epithelium, fibronectin probably provides a substrate on which the dedifferentiation stump tissue cells will migrate and accumulate.</text>
</comment>
<comment type="subunit">
    <text evidence="1">Dimers or multimers of alternatively spliced variants, connected by 2 disulfide bonds near the carboxyl ends.</text>
</comment>
<comment type="PTM">
    <text>Forms covalent cross-links mediated by a transglutaminase, such as F13A or TGM2, between a glutamine and the epsilon-amino group of a lysine residue, forming homopolymers and heteropolymers (e.g. fibrinogen-fibronectin, collagen-fibronectin heteropolymers).</text>
</comment>
<sequence>NSNGASCHFPFLYNNRNYTDCTSEGRRDSMKWCGTTLNLYADQKFGFCPMAAHEEICTTNEGVMYRVGVQVDKQHDQGHMMRCTCVGNGRGEWNCVAYSQLRDQCIVDGITYDVNHTFTKRHEEGHMMNCTCYGQGRGWWKCDAIDQCQDSETRQFYQIGDSWEKHVQGVRYQCYSIGRGIGEWHCQPLQ</sequence>
<organism>
    <name type="scientific">Notophthalmus viridescens</name>
    <name type="common">Eastern newt</name>
    <name type="synonym">Triturus viridescens</name>
    <dbReference type="NCBI Taxonomy" id="8316"/>
    <lineage>
        <taxon>Eukaryota</taxon>
        <taxon>Metazoa</taxon>
        <taxon>Chordata</taxon>
        <taxon>Craniata</taxon>
        <taxon>Vertebrata</taxon>
        <taxon>Euteleostomi</taxon>
        <taxon>Amphibia</taxon>
        <taxon>Batrachia</taxon>
        <taxon>Caudata</taxon>
        <taxon>Salamandroidea</taxon>
        <taxon>Salamandridae</taxon>
        <taxon>Pleurodelinae</taxon>
        <taxon>Notophthalmus</taxon>
    </lineage>
</organism>
<proteinExistence type="evidence at transcript level"/>